<gene>
    <name evidence="1" type="primary">dxs</name>
    <name type="ordered locus">BP2798</name>
</gene>
<reference key="1">
    <citation type="journal article" date="2003" name="Nat. Genet.">
        <title>Comparative analysis of the genome sequences of Bordetella pertussis, Bordetella parapertussis and Bordetella bronchiseptica.</title>
        <authorList>
            <person name="Parkhill J."/>
            <person name="Sebaihia M."/>
            <person name="Preston A."/>
            <person name="Murphy L.D."/>
            <person name="Thomson N.R."/>
            <person name="Harris D.E."/>
            <person name="Holden M.T.G."/>
            <person name="Churcher C.M."/>
            <person name="Bentley S.D."/>
            <person name="Mungall K.L."/>
            <person name="Cerdeno-Tarraga A.-M."/>
            <person name="Temple L."/>
            <person name="James K.D."/>
            <person name="Harris B."/>
            <person name="Quail M.A."/>
            <person name="Achtman M."/>
            <person name="Atkin R."/>
            <person name="Baker S."/>
            <person name="Basham D."/>
            <person name="Bason N."/>
            <person name="Cherevach I."/>
            <person name="Chillingworth T."/>
            <person name="Collins M."/>
            <person name="Cronin A."/>
            <person name="Davis P."/>
            <person name="Doggett J."/>
            <person name="Feltwell T."/>
            <person name="Goble A."/>
            <person name="Hamlin N."/>
            <person name="Hauser H."/>
            <person name="Holroyd S."/>
            <person name="Jagels K."/>
            <person name="Leather S."/>
            <person name="Moule S."/>
            <person name="Norberczak H."/>
            <person name="O'Neil S."/>
            <person name="Ormond D."/>
            <person name="Price C."/>
            <person name="Rabbinowitsch E."/>
            <person name="Rutter S."/>
            <person name="Sanders M."/>
            <person name="Saunders D."/>
            <person name="Seeger K."/>
            <person name="Sharp S."/>
            <person name="Simmonds M."/>
            <person name="Skelton J."/>
            <person name="Squares R."/>
            <person name="Squares S."/>
            <person name="Stevens K."/>
            <person name="Unwin L."/>
            <person name="Whitehead S."/>
            <person name="Barrell B.G."/>
            <person name="Maskell D.J."/>
        </authorList>
    </citation>
    <scope>NUCLEOTIDE SEQUENCE [LARGE SCALE GENOMIC DNA]</scope>
    <source>
        <strain>Tohama I / ATCC BAA-589 / NCTC 13251</strain>
    </source>
</reference>
<name>DXS_BORPE</name>
<dbReference type="EC" id="2.2.1.7" evidence="1"/>
<dbReference type="EMBL" id="BX640419">
    <property type="protein sequence ID" value="CAE43071.1"/>
    <property type="molecule type" value="Genomic_DNA"/>
</dbReference>
<dbReference type="RefSeq" id="NP_881398.1">
    <property type="nucleotide sequence ID" value="NC_002929.2"/>
</dbReference>
<dbReference type="RefSeq" id="WP_010931136.1">
    <property type="nucleotide sequence ID" value="NZ_CP039022.1"/>
</dbReference>
<dbReference type="SMR" id="Q7VV87"/>
<dbReference type="STRING" id="257313.BP2798"/>
<dbReference type="PaxDb" id="257313-BP2798"/>
<dbReference type="GeneID" id="69602698"/>
<dbReference type="KEGG" id="bpe:BP2798"/>
<dbReference type="PATRIC" id="fig|257313.5.peg.3018"/>
<dbReference type="eggNOG" id="COG1154">
    <property type="taxonomic scope" value="Bacteria"/>
</dbReference>
<dbReference type="HOGENOM" id="CLU_009227_1_4_4"/>
<dbReference type="UniPathway" id="UPA00064">
    <property type="reaction ID" value="UER00091"/>
</dbReference>
<dbReference type="Proteomes" id="UP000002676">
    <property type="component" value="Chromosome"/>
</dbReference>
<dbReference type="GO" id="GO:0005829">
    <property type="term" value="C:cytosol"/>
    <property type="evidence" value="ECO:0007669"/>
    <property type="project" value="TreeGrafter"/>
</dbReference>
<dbReference type="GO" id="GO:0008661">
    <property type="term" value="F:1-deoxy-D-xylulose-5-phosphate synthase activity"/>
    <property type="evidence" value="ECO:0007669"/>
    <property type="project" value="UniProtKB-UniRule"/>
</dbReference>
<dbReference type="GO" id="GO:0000287">
    <property type="term" value="F:magnesium ion binding"/>
    <property type="evidence" value="ECO:0007669"/>
    <property type="project" value="UniProtKB-UniRule"/>
</dbReference>
<dbReference type="GO" id="GO:0030976">
    <property type="term" value="F:thiamine pyrophosphate binding"/>
    <property type="evidence" value="ECO:0007669"/>
    <property type="project" value="UniProtKB-UniRule"/>
</dbReference>
<dbReference type="GO" id="GO:0052865">
    <property type="term" value="P:1-deoxy-D-xylulose 5-phosphate biosynthetic process"/>
    <property type="evidence" value="ECO:0007669"/>
    <property type="project" value="UniProtKB-UniPathway"/>
</dbReference>
<dbReference type="GO" id="GO:0019288">
    <property type="term" value="P:isopentenyl diphosphate biosynthetic process, methylerythritol 4-phosphate pathway"/>
    <property type="evidence" value="ECO:0007669"/>
    <property type="project" value="TreeGrafter"/>
</dbReference>
<dbReference type="GO" id="GO:0016114">
    <property type="term" value="P:terpenoid biosynthetic process"/>
    <property type="evidence" value="ECO:0007669"/>
    <property type="project" value="UniProtKB-UniRule"/>
</dbReference>
<dbReference type="GO" id="GO:0009228">
    <property type="term" value="P:thiamine biosynthetic process"/>
    <property type="evidence" value="ECO:0007669"/>
    <property type="project" value="UniProtKB-UniRule"/>
</dbReference>
<dbReference type="CDD" id="cd02007">
    <property type="entry name" value="TPP_DXS"/>
    <property type="match status" value="1"/>
</dbReference>
<dbReference type="CDD" id="cd07033">
    <property type="entry name" value="TPP_PYR_DXS_TK_like"/>
    <property type="match status" value="1"/>
</dbReference>
<dbReference type="FunFam" id="3.40.50.920:FF:000002">
    <property type="entry name" value="1-deoxy-D-xylulose-5-phosphate synthase"/>
    <property type="match status" value="1"/>
</dbReference>
<dbReference type="FunFam" id="3.40.50.970:FF:000005">
    <property type="entry name" value="1-deoxy-D-xylulose-5-phosphate synthase"/>
    <property type="match status" value="1"/>
</dbReference>
<dbReference type="Gene3D" id="3.40.50.920">
    <property type="match status" value="1"/>
</dbReference>
<dbReference type="Gene3D" id="3.40.50.970">
    <property type="match status" value="2"/>
</dbReference>
<dbReference type="HAMAP" id="MF_00315">
    <property type="entry name" value="DXP_synth"/>
    <property type="match status" value="1"/>
</dbReference>
<dbReference type="InterPro" id="IPR005477">
    <property type="entry name" value="Dxylulose-5-P_synthase"/>
</dbReference>
<dbReference type="InterPro" id="IPR029061">
    <property type="entry name" value="THDP-binding"/>
</dbReference>
<dbReference type="InterPro" id="IPR009014">
    <property type="entry name" value="Transketo_C/PFOR_II"/>
</dbReference>
<dbReference type="InterPro" id="IPR005475">
    <property type="entry name" value="Transketolase-like_Pyr-bd"/>
</dbReference>
<dbReference type="InterPro" id="IPR020826">
    <property type="entry name" value="Transketolase_BS"/>
</dbReference>
<dbReference type="InterPro" id="IPR033248">
    <property type="entry name" value="Transketolase_C"/>
</dbReference>
<dbReference type="InterPro" id="IPR049557">
    <property type="entry name" value="Transketolase_CS"/>
</dbReference>
<dbReference type="NCBIfam" id="TIGR00204">
    <property type="entry name" value="dxs"/>
    <property type="match status" value="1"/>
</dbReference>
<dbReference type="NCBIfam" id="NF003933">
    <property type="entry name" value="PRK05444.2-2"/>
    <property type="match status" value="1"/>
</dbReference>
<dbReference type="PANTHER" id="PTHR43322">
    <property type="entry name" value="1-D-DEOXYXYLULOSE 5-PHOSPHATE SYNTHASE-RELATED"/>
    <property type="match status" value="1"/>
</dbReference>
<dbReference type="PANTHER" id="PTHR43322:SF5">
    <property type="entry name" value="1-DEOXY-D-XYLULOSE-5-PHOSPHATE SYNTHASE, CHLOROPLASTIC"/>
    <property type="match status" value="1"/>
</dbReference>
<dbReference type="Pfam" id="PF13292">
    <property type="entry name" value="DXP_synthase_N"/>
    <property type="match status" value="1"/>
</dbReference>
<dbReference type="Pfam" id="PF02779">
    <property type="entry name" value="Transket_pyr"/>
    <property type="match status" value="1"/>
</dbReference>
<dbReference type="Pfam" id="PF02780">
    <property type="entry name" value="Transketolase_C"/>
    <property type="match status" value="1"/>
</dbReference>
<dbReference type="SMART" id="SM00861">
    <property type="entry name" value="Transket_pyr"/>
    <property type="match status" value="1"/>
</dbReference>
<dbReference type="SUPFAM" id="SSF52518">
    <property type="entry name" value="Thiamin diphosphate-binding fold (THDP-binding)"/>
    <property type="match status" value="2"/>
</dbReference>
<dbReference type="SUPFAM" id="SSF52922">
    <property type="entry name" value="TK C-terminal domain-like"/>
    <property type="match status" value="1"/>
</dbReference>
<dbReference type="PROSITE" id="PS00801">
    <property type="entry name" value="TRANSKETOLASE_1"/>
    <property type="match status" value="1"/>
</dbReference>
<dbReference type="PROSITE" id="PS00802">
    <property type="entry name" value="TRANSKETOLASE_2"/>
    <property type="match status" value="1"/>
</dbReference>
<keyword id="KW-0414">Isoprene biosynthesis</keyword>
<keyword id="KW-0460">Magnesium</keyword>
<keyword id="KW-0479">Metal-binding</keyword>
<keyword id="KW-1185">Reference proteome</keyword>
<keyword id="KW-0784">Thiamine biosynthesis</keyword>
<keyword id="KW-0786">Thiamine pyrophosphate</keyword>
<keyword id="KW-0808">Transferase</keyword>
<accession>Q7VV87</accession>
<protein>
    <recommendedName>
        <fullName evidence="1">1-deoxy-D-xylulose-5-phosphate synthase</fullName>
        <ecNumber evidence="1">2.2.1.7</ecNumber>
    </recommendedName>
    <alternativeName>
        <fullName evidence="1">1-deoxyxylulose-5-phosphate synthase</fullName>
        <shortName evidence="1">DXP synthase</shortName>
        <shortName evidence="1">DXPS</shortName>
    </alternativeName>
</protein>
<organism>
    <name type="scientific">Bordetella pertussis (strain Tohama I / ATCC BAA-589 / NCTC 13251)</name>
    <dbReference type="NCBI Taxonomy" id="257313"/>
    <lineage>
        <taxon>Bacteria</taxon>
        <taxon>Pseudomonadati</taxon>
        <taxon>Pseudomonadota</taxon>
        <taxon>Betaproteobacteria</taxon>
        <taxon>Burkholderiales</taxon>
        <taxon>Alcaligenaceae</taxon>
        <taxon>Bordetella</taxon>
    </lineage>
</organism>
<comment type="function">
    <text evidence="1">Catalyzes the acyloin condensation reaction between C atoms 2 and 3 of pyruvate and glyceraldehyde 3-phosphate to yield 1-deoxy-D-xylulose-5-phosphate (DXP).</text>
</comment>
<comment type="catalytic activity">
    <reaction evidence="1">
        <text>D-glyceraldehyde 3-phosphate + pyruvate + H(+) = 1-deoxy-D-xylulose 5-phosphate + CO2</text>
        <dbReference type="Rhea" id="RHEA:12605"/>
        <dbReference type="ChEBI" id="CHEBI:15361"/>
        <dbReference type="ChEBI" id="CHEBI:15378"/>
        <dbReference type="ChEBI" id="CHEBI:16526"/>
        <dbReference type="ChEBI" id="CHEBI:57792"/>
        <dbReference type="ChEBI" id="CHEBI:59776"/>
        <dbReference type="EC" id="2.2.1.7"/>
    </reaction>
</comment>
<comment type="cofactor">
    <cofactor evidence="1">
        <name>Mg(2+)</name>
        <dbReference type="ChEBI" id="CHEBI:18420"/>
    </cofactor>
    <text evidence="1">Binds 1 Mg(2+) ion per subunit.</text>
</comment>
<comment type="cofactor">
    <cofactor evidence="1">
        <name>thiamine diphosphate</name>
        <dbReference type="ChEBI" id="CHEBI:58937"/>
    </cofactor>
    <text evidence="1">Binds 1 thiamine pyrophosphate per subunit.</text>
</comment>
<comment type="pathway">
    <text evidence="1">Metabolic intermediate biosynthesis; 1-deoxy-D-xylulose 5-phosphate biosynthesis; 1-deoxy-D-xylulose 5-phosphate from D-glyceraldehyde 3-phosphate and pyruvate: step 1/1.</text>
</comment>
<comment type="subunit">
    <text evidence="1">Homodimer.</text>
</comment>
<comment type="similarity">
    <text evidence="1">Belongs to the transketolase family. DXPS subfamily.</text>
</comment>
<sequence length="620" mass="66261">MTTELLDRILSPADLRQLDRRELKRLADELRGFVLESVSRTGGHLSSNLGTVELSLALHYVFDTPHDRIVWDVGHQSYPHKILTGRREGMAHLRQQGGISGFPKRSESEYDAFGTAHSSTSISAALGMAVASRNAGVQRQHIAVIGDGAMSAGMAFEAMNNAGVTPNINLLVVLNDNDMSISPPVGALNRYLARLMSGQFYAAAKNVGRAVLQHVPPVLELARRLEEHAKGMVTPATLFEEFGFNYVGPIDGHDLDALVPTLQNLRALPGLQFLHVVTRKGQGYKLAEADPVLYHGPGKFDPAVGIQQAKAPARKTFTQVFGQWLCDMAERDERLVGITPAMREGSGLVEFEQRFPQRYFDVGIAEQHAVTFAAGLACEGQKPVVAIYSTFLQRGYDQLVHDVALQNLDVTFALDRAGLVGADGATHAGNYDIAFLRCVPNMVVAAPSDESEARLLLSTCYEHPGPASVRYPRGAGCGAAVGEGLATVPLGKGLVRREGRRIAILGFGTLVQAALGAAGQIDAMVADMRFVKPLDRELVLELAARHDALVTVEEAAIMGGAGSAVLETLAEAGVTLPVLQLGLPDAFIDHGDQAALLAGLGLDAAGIERAIRARFGALLA</sequence>
<proteinExistence type="inferred from homology"/>
<evidence type="ECO:0000255" key="1">
    <source>
        <dbReference type="HAMAP-Rule" id="MF_00315"/>
    </source>
</evidence>
<feature type="chain" id="PRO_0000189090" description="1-deoxy-D-xylulose-5-phosphate synthase">
    <location>
        <begin position="1"/>
        <end position="620"/>
    </location>
</feature>
<feature type="binding site" evidence="1">
    <location>
        <position position="75"/>
    </location>
    <ligand>
        <name>thiamine diphosphate</name>
        <dbReference type="ChEBI" id="CHEBI:58937"/>
    </ligand>
</feature>
<feature type="binding site" evidence="1">
    <location>
        <begin position="116"/>
        <end position="118"/>
    </location>
    <ligand>
        <name>thiamine diphosphate</name>
        <dbReference type="ChEBI" id="CHEBI:58937"/>
    </ligand>
</feature>
<feature type="binding site" evidence="1">
    <location>
        <position position="147"/>
    </location>
    <ligand>
        <name>Mg(2+)</name>
        <dbReference type="ChEBI" id="CHEBI:18420"/>
    </ligand>
</feature>
<feature type="binding site" evidence="1">
    <location>
        <begin position="148"/>
        <end position="149"/>
    </location>
    <ligand>
        <name>thiamine diphosphate</name>
        <dbReference type="ChEBI" id="CHEBI:58937"/>
    </ligand>
</feature>
<feature type="binding site" evidence="1">
    <location>
        <position position="177"/>
    </location>
    <ligand>
        <name>Mg(2+)</name>
        <dbReference type="ChEBI" id="CHEBI:18420"/>
    </ligand>
</feature>
<feature type="binding site" evidence="1">
    <location>
        <position position="177"/>
    </location>
    <ligand>
        <name>thiamine diphosphate</name>
        <dbReference type="ChEBI" id="CHEBI:58937"/>
    </ligand>
</feature>
<feature type="binding site" evidence="1">
    <location>
        <position position="284"/>
    </location>
    <ligand>
        <name>thiamine diphosphate</name>
        <dbReference type="ChEBI" id="CHEBI:58937"/>
    </ligand>
</feature>
<feature type="binding site" evidence="1">
    <location>
        <position position="366"/>
    </location>
    <ligand>
        <name>thiamine diphosphate</name>
        <dbReference type="ChEBI" id="CHEBI:58937"/>
    </ligand>
</feature>